<keyword id="KW-0687">Ribonucleoprotein</keyword>
<keyword id="KW-0689">Ribosomal protein</keyword>
<keyword id="KW-0694">RNA-binding</keyword>
<keyword id="KW-0699">rRNA-binding</keyword>
<reference key="1">
    <citation type="submission" date="2006-12" db="EMBL/GenBank/DDBJ databases">
        <authorList>
            <person name="Hendrix L."/>
            <person name="Mohamoud Y."/>
            <person name="Radune D."/>
            <person name="Shvartsbeyn A."/>
            <person name="Daugherty S."/>
            <person name="Dodson R."/>
            <person name="Durkin A.S."/>
            <person name="Harkins D."/>
            <person name="Huot H."/>
            <person name="Kothari S.P."/>
            <person name="Madupu R."/>
            <person name="Li J."/>
            <person name="Nelson W.C."/>
            <person name="Shrivastava S."/>
            <person name="Giglio M.G."/>
            <person name="Haft D."/>
            <person name="Selengut J."/>
            <person name="Fraser-Ligget C."/>
            <person name="Seshadri R."/>
        </authorList>
    </citation>
    <scope>NUCLEOTIDE SEQUENCE [LARGE SCALE GENOMIC DNA]</scope>
    <source>
        <strain>ATCC 35685 / KC583 / Herrer 020/F12,63</strain>
    </source>
</reference>
<comment type="function">
    <text evidence="1">This is one of the proteins that bind and probably mediate the attachment of the 5S RNA into the large ribosomal subunit, where it forms part of the central protuberance.</text>
</comment>
<comment type="subunit">
    <text evidence="1">Part of the 50S ribosomal subunit; part of the 5S rRNA/L5/L18/L25 subcomplex. Contacts the 5S and 23S rRNAs.</text>
</comment>
<comment type="similarity">
    <text evidence="1">Belongs to the universal ribosomal protein uL18 family.</text>
</comment>
<accession>A1USR0</accession>
<organism>
    <name type="scientific">Bartonella bacilliformis (strain ATCC 35685 / KC583 / Herrer 020/F12,63)</name>
    <dbReference type="NCBI Taxonomy" id="360095"/>
    <lineage>
        <taxon>Bacteria</taxon>
        <taxon>Pseudomonadati</taxon>
        <taxon>Pseudomonadota</taxon>
        <taxon>Alphaproteobacteria</taxon>
        <taxon>Hyphomicrobiales</taxon>
        <taxon>Bartonellaceae</taxon>
        <taxon>Bartonella</taxon>
    </lineage>
</organism>
<proteinExistence type="inferred from homology"/>
<protein>
    <recommendedName>
        <fullName evidence="1">Large ribosomal subunit protein uL18</fullName>
    </recommendedName>
    <alternativeName>
        <fullName evidence="2">50S ribosomal protein L18</fullName>
    </alternativeName>
</protein>
<feature type="chain" id="PRO_1000052989" description="Large ribosomal subunit protein uL18">
    <location>
        <begin position="1"/>
        <end position="120"/>
    </location>
</feature>
<dbReference type="EMBL" id="CP000524">
    <property type="protein sequence ID" value="ABM44732.1"/>
    <property type="molecule type" value="Genomic_DNA"/>
</dbReference>
<dbReference type="RefSeq" id="WP_005766945.1">
    <property type="nucleotide sequence ID" value="NC_008783.1"/>
</dbReference>
<dbReference type="SMR" id="A1USR0"/>
<dbReference type="STRING" id="360095.BARBAKC583_0714"/>
<dbReference type="GeneID" id="4684777"/>
<dbReference type="KEGG" id="bbk:BARBAKC583_0714"/>
<dbReference type="PATRIC" id="fig|360095.6.peg.693"/>
<dbReference type="eggNOG" id="COG0256">
    <property type="taxonomic scope" value="Bacteria"/>
</dbReference>
<dbReference type="HOGENOM" id="CLU_098841_0_1_5"/>
<dbReference type="OrthoDB" id="9810939at2"/>
<dbReference type="Proteomes" id="UP000000643">
    <property type="component" value="Chromosome"/>
</dbReference>
<dbReference type="GO" id="GO:0022625">
    <property type="term" value="C:cytosolic large ribosomal subunit"/>
    <property type="evidence" value="ECO:0007669"/>
    <property type="project" value="TreeGrafter"/>
</dbReference>
<dbReference type="GO" id="GO:0008097">
    <property type="term" value="F:5S rRNA binding"/>
    <property type="evidence" value="ECO:0007669"/>
    <property type="project" value="TreeGrafter"/>
</dbReference>
<dbReference type="GO" id="GO:0003735">
    <property type="term" value="F:structural constituent of ribosome"/>
    <property type="evidence" value="ECO:0007669"/>
    <property type="project" value="InterPro"/>
</dbReference>
<dbReference type="GO" id="GO:0006412">
    <property type="term" value="P:translation"/>
    <property type="evidence" value="ECO:0007669"/>
    <property type="project" value="UniProtKB-UniRule"/>
</dbReference>
<dbReference type="CDD" id="cd00432">
    <property type="entry name" value="Ribosomal_L18_L5e"/>
    <property type="match status" value="1"/>
</dbReference>
<dbReference type="FunFam" id="3.30.420.100:FF:000001">
    <property type="entry name" value="50S ribosomal protein L18"/>
    <property type="match status" value="1"/>
</dbReference>
<dbReference type="Gene3D" id="3.30.420.100">
    <property type="match status" value="1"/>
</dbReference>
<dbReference type="HAMAP" id="MF_01337_B">
    <property type="entry name" value="Ribosomal_uL18_B"/>
    <property type="match status" value="1"/>
</dbReference>
<dbReference type="InterPro" id="IPR004389">
    <property type="entry name" value="Ribosomal_uL18_bac-type"/>
</dbReference>
<dbReference type="InterPro" id="IPR005484">
    <property type="entry name" value="Ribosomal_uL18_bac/euk"/>
</dbReference>
<dbReference type="NCBIfam" id="TIGR00060">
    <property type="entry name" value="L18_bact"/>
    <property type="match status" value="1"/>
</dbReference>
<dbReference type="PANTHER" id="PTHR12899">
    <property type="entry name" value="39S RIBOSOMAL PROTEIN L18, MITOCHONDRIAL"/>
    <property type="match status" value="1"/>
</dbReference>
<dbReference type="PANTHER" id="PTHR12899:SF3">
    <property type="entry name" value="LARGE RIBOSOMAL SUBUNIT PROTEIN UL18M"/>
    <property type="match status" value="1"/>
</dbReference>
<dbReference type="Pfam" id="PF00861">
    <property type="entry name" value="Ribosomal_L18p"/>
    <property type="match status" value="1"/>
</dbReference>
<dbReference type="SUPFAM" id="SSF53137">
    <property type="entry name" value="Translational machinery components"/>
    <property type="match status" value="1"/>
</dbReference>
<name>RL18_BARBK</name>
<gene>
    <name evidence="1" type="primary">rplR</name>
    <name type="ordered locus">BARBAKC583_0714</name>
</gene>
<sequence>MVSSKEIIQHRAKRVRRQIKAAANGRPRLSVYRSNQNIYAQIIDDVRGCTLASACTLEEGMKKSLRSGSDKKAAFAVGKLIAERAKKSGINEVVFDRGAYVYHGRVKALAEAAREGGLSF</sequence>
<evidence type="ECO:0000255" key="1">
    <source>
        <dbReference type="HAMAP-Rule" id="MF_01337"/>
    </source>
</evidence>
<evidence type="ECO:0000305" key="2"/>